<dbReference type="EMBL" id="AY634297">
    <property type="protein sequence ID" value="AAW02903.1"/>
    <property type="molecule type" value="Genomic_DNA"/>
</dbReference>
<dbReference type="EMBL" id="HE600980">
    <property type="protein sequence ID" value="CAP32279.1"/>
    <property type="molecule type" value="Genomic_DNA"/>
</dbReference>
<dbReference type="SMR" id="Q61B55"/>
<dbReference type="FunCoup" id="Q61B55">
    <property type="interactions" value="118"/>
</dbReference>
<dbReference type="STRING" id="6238.Q61B55"/>
<dbReference type="EnsemblMetazoa" id="CBG13491.1">
    <property type="protein sequence ID" value="CBG13491.1"/>
    <property type="gene ID" value="WBGene00034249"/>
</dbReference>
<dbReference type="KEGG" id="cbr:CBG_13491"/>
<dbReference type="CTD" id="8576950"/>
<dbReference type="WormBase" id="CBG13491">
    <property type="protein sequence ID" value="CBP17858"/>
    <property type="gene ID" value="WBGene00034249"/>
    <property type="gene designation" value="Cbr-gpa-4"/>
</dbReference>
<dbReference type="eggNOG" id="KOG0082">
    <property type="taxonomic scope" value="Eukaryota"/>
</dbReference>
<dbReference type="HOGENOM" id="CLU_014184_6_0_1"/>
<dbReference type="InParanoid" id="Q61B55"/>
<dbReference type="OMA" id="EYTGLNN"/>
<dbReference type="Proteomes" id="UP000008549">
    <property type="component" value="Unassembled WGS sequence"/>
</dbReference>
<dbReference type="GO" id="GO:0005737">
    <property type="term" value="C:cytoplasm"/>
    <property type="evidence" value="ECO:0000318"/>
    <property type="project" value="GO_Central"/>
</dbReference>
<dbReference type="GO" id="GO:0005834">
    <property type="term" value="C:heterotrimeric G-protein complex"/>
    <property type="evidence" value="ECO:0000318"/>
    <property type="project" value="GO_Central"/>
</dbReference>
<dbReference type="GO" id="GO:0097730">
    <property type="term" value="C:non-motile cilium"/>
    <property type="evidence" value="ECO:0007669"/>
    <property type="project" value="EnsemblMetazoa"/>
</dbReference>
<dbReference type="GO" id="GO:0001664">
    <property type="term" value="F:G protein-coupled receptor binding"/>
    <property type="evidence" value="ECO:0000318"/>
    <property type="project" value="GO_Central"/>
</dbReference>
<dbReference type="GO" id="GO:0031683">
    <property type="term" value="F:G-protein beta/gamma-subunit complex binding"/>
    <property type="evidence" value="ECO:0000318"/>
    <property type="project" value="GO_Central"/>
</dbReference>
<dbReference type="GO" id="GO:0005525">
    <property type="term" value="F:GTP binding"/>
    <property type="evidence" value="ECO:0007669"/>
    <property type="project" value="UniProtKB-KW"/>
</dbReference>
<dbReference type="GO" id="GO:0003924">
    <property type="term" value="F:GTPase activity"/>
    <property type="evidence" value="ECO:0000318"/>
    <property type="project" value="GO_Central"/>
</dbReference>
<dbReference type="GO" id="GO:0046872">
    <property type="term" value="F:metal ion binding"/>
    <property type="evidence" value="ECO:0007669"/>
    <property type="project" value="UniProtKB-KW"/>
</dbReference>
<dbReference type="GO" id="GO:0007188">
    <property type="term" value="P:adenylate cyclase-modulating G protein-coupled receptor signaling pathway"/>
    <property type="evidence" value="ECO:0000318"/>
    <property type="project" value="GO_Central"/>
</dbReference>
<dbReference type="CDD" id="cd00066">
    <property type="entry name" value="G-alpha"/>
    <property type="match status" value="1"/>
</dbReference>
<dbReference type="FunFam" id="1.10.400.10:FF:000001">
    <property type="entry name" value="Guanine nucleotide-binding protein G(I) subunit alpha"/>
    <property type="match status" value="1"/>
</dbReference>
<dbReference type="FunFam" id="3.40.50.300:FF:002307">
    <property type="entry name" value="Guanine nucleotide-binding protein G(k) subunit alpha"/>
    <property type="match status" value="1"/>
</dbReference>
<dbReference type="Gene3D" id="1.10.400.10">
    <property type="entry name" value="GI Alpha 1, domain 2-like"/>
    <property type="match status" value="1"/>
</dbReference>
<dbReference type="Gene3D" id="3.40.50.300">
    <property type="entry name" value="P-loop containing nucleotide triphosphate hydrolases"/>
    <property type="match status" value="1"/>
</dbReference>
<dbReference type="InterPro" id="IPR001408">
    <property type="entry name" value="Gprotein_alpha_I"/>
</dbReference>
<dbReference type="InterPro" id="IPR001019">
    <property type="entry name" value="Gprotein_alpha_su"/>
</dbReference>
<dbReference type="InterPro" id="IPR011025">
    <property type="entry name" value="GproteinA_insert"/>
</dbReference>
<dbReference type="InterPro" id="IPR027417">
    <property type="entry name" value="P-loop_NTPase"/>
</dbReference>
<dbReference type="PANTHER" id="PTHR10218">
    <property type="entry name" value="GTP-BINDING PROTEIN ALPHA SUBUNIT"/>
    <property type="match status" value="1"/>
</dbReference>
<dbReference type="PANTHER" id="PTHR10218:SF349">
    <property type="entry name" value="GUANINE NUCLEOTIDE-BINDING PROTEIN ALPHA-4 SUBUNIT"/>
    <property type="match status" value="1"/>
</dbReference>
<dbReference type="Pfam" id="PF00503">
    <property type="entry name" value="G-alpha"/>
    <property type="match status" value="1"/>
</dbReference>
<dbReference type="PRINTS" id="PR00318">
    <property type="entry name" value="GPROTEINA"/>
</dbReference>
<dbReference type="PRINTS" id="PR00441">
    <property type="entry name" value="GPROTEINAI"/>
</dbReference>
<dbReference type="SMART" id="SM00275">
    <property type="entry name" value="G_alpha"/>
    <property type="match status" value="1"/>
</dbReference>
<dbReference type="SUPFAM" id="SSF52540">
    <property type="entry name" value="P-loop containing nucleoside triphosphate hydrolases"/>
    <property type="match status" value="1"/>
</dbReference>
<dbReference type="SUPFAM" id="SSF47895">
    <property type="entry name" value="Transducin (alpha subunit), insertion domain"/>
    <property type="match status" value="1"/>
</dbReference>
<dbReference type="PROSITE" id="PS51882">
    <property type="entry name" value="G_ALPHA"/>
    <property type="match status" value="1"/>
</dbReference>
<evidence type="ECO:0000250" key="1"/>
<evidence type="ECO:0000255" key="2"/>
<evidence type="ECO:0000255" key="3">
    <source>
        <dbReference type="PROSITE-ProRule" id="PRU01230"/>
    </source>
</evidence>
<evidence type="ECO:0000305" key="4"/>
<proteinExistence type="inferred from homology"/>
<gene>
    <name type="primary">gpa-4</name>
    <name type="ORF">CBG13491</name>
</gene>
<accession>Q61B55</accession>
<accession>A8XI06</accession>
<organism>
    <name type="scientific">Caenorhabditis briggsae</name>
    <dbReference type="NCBI Taxonomy" id="6238"/>
    <lineage>
        <taxon>Eukaryota</taxon>
        <taxon>Metazoa</taxon>
        <taxon>Ecdysozoa</taxon>
        <taxon>Nematoda</taxon>
        <taxon>Chromadorea</taxon>
        <taxon>Rhabditida</taxon>
        <taxon>Rhabditina</taxon>
        <taxon>Rhabditomorpha</taxon>
        <taxon>Rhabditoidea</taxon>
        <taxon>Rhabditidae</taxon>
        <taxon>Peloderinae</taxon>
        <taxon>Caenorhabditis</taxon>
    </lineage>
</organism>
<protein>
    <recommendedName>
        <fullName>Guanine nucleotide-binding protein alpha-4 subunit</fullName>
    </recommendedName>
</protein>
<sequence>MGCVHSTGSEAKKRSQLIDAQLRLEHDQCGTEVKLLLLGAGESGKSTIVRQMRILHVIGFSKQEKLAYRAVIYSNMIQSMLVIIRVMKALGIDFENSAHKEDAHQFSSHYLHIHNADLSEAFSLELSDLMKNLWSDAGVRRCFKRSREFQLNDSTEYYFNSLDRISETTYLPTQDDILRARVKSTGIVETDFMYKDIYFRMFDVGGQRSERKKWIHCFEGVTAVIFCVALSEYDMKLAEDKIMNRMHESMQLFDSIVNNRWFTETSMILFLNKMDIFEEKIRHIPLNICFPEYKGGTSVTETSNYIRSVFEKLNKRKSTAQKEVYSHFTCATDTNNIRFVFDAVTDIIIRYNLKDCGLF</sequence>
<feature type="initiator methionine" description="Removed" evidence="2">
    <location>
        <position position="1"/>
    </location>
</feature>
<feature type="chain" id="PRO_0000203634" description="Guanine nucleotide-binding protein alpha-4 subunit">
    <location>
        <begin position="2"/>
        <end position="359"/>
    </location>
</feature>
<feature type="domain" description="G-alpha" evidence="3">
    <location>
        <begin position="31"/>
        <end position="359"/>
    </location>
</feature>
<feature type="region of interest" description="G1 motif" evidence="3">
    <location>
        <begin position="34"/>
        <end position="47"/>
    </location>
</feature>
<feature type="region of interest" description="G2 motif" evidence="3">
    <location>
        <begin position="176"/>
        <end position="184"/>
    </location>
</feature>
<feature type="region of interest" description="G3 motif" evidence="3">
    <location>
        <begin position="199"/>
        <end position="208"/>
    </location>
</feature>
<feature type="region of interest" description="G4 motif" evidence="3">
    <location>
        <begin position="268"/>
        <end position="275"/>
    </location>
</feature>
<feature type="region of interest" description="G5 motif" evidence="3">
    <location>
        <begin position="329"/>
        <end position="334"/>
    </location>
</feature>
<feature type="binding site" evidence="1">
    <location>
        <begin position="39"/>
        <end position="46"/>
    </location>
    <ligand>
        <name>GTP</name>
        <dbReference type="ChEBI" id="CHEBI:37565"/>
    </ligand>
</feature>
<feature type="binding site" evidence="1">
    <location>
        <position position="46"/>
    </location>
    <ligand>
        <name>Mg(2+)</name>
        <dbReference type="ChEBI" id="CHEBI:18420"/>
    </ligand>
</feature>
<feature type="binding site" evidence="1">
    <location>
        <begin position="178"/>
        <end position="184"/>
    </location>
    <ligand>
        <name>GTP</name>
        <dbReference type="ChEBI" id="CHEBI:37565"/>
    </ligand>
</feature>
<feature type="binding site" evidence="1">
    <location>
        <begin position="203"/>
        <end position="207"/>
    </location>
    <ligand>
        <name>GTP</name>
        <dbReference type="ChEBI" id="CHEBI:37565"/>
    </ligand>
</feature>
<feature type="binding site" evidence="1">
    <location>
        <begin position="272"/>
        <end position="275"/>
    </location>
    <ligand>
        <name>GTP</name>
        <dbReference type="ChEBI" id="CHEBI:37565"/>
    </ligand>
</feature>
<feature type="binding site" evidence="1">
    <location>
        <position position="331"/>
    </location>
    <ligand>
        <name>GTP</name>
        <dbReference type="ChEBI" id="CHEBI:37565"/>
    </ligand>
</feature>
<feature type="lipid moiety-binding region" description="N-myristoyl glycine" evidence="2">
    <location>
        <position position="2"/>
    </location>
</feature>
<feature type="lipid moiety-binding region" description="S-palmitoyl cysteine" evidence="2">
    <location>
        <position position="3"/>
    </location>
</feature>
<comment type="function">
    <text>Guanine nucleotide-binding proteins (G proteins) are involved as modulators or transducers in various transmembrane signaling systems.</text>
</comment>
<comment type="subunit">
    <text>G proteins are composed of 3 units; alpha, beta and gamma. The alpha chain contains the guanine nucleotide binding site.</text>
</comment>
<comment type="similarity">
    <text evidence="4">Belongs to the G-alpha family. G(i/o/t/z) subfamily.</text>
</comment>
<reference key="1">
    <citation type="journal article" date="2005" name="Mol. Genet. Genomics">
        <title>Functional constraint and divergence in the G protein family in Caenorhabditis elegans and Caenorhabditis briggsae.</title>
        <authorList>
            <person name="Jovelin R."/>
            <person name="Phillips P.C."/>
        </authorList>
    </citation>
    <scope>NUCLEOTIDE SEQUENCE [GENOMIC DNA]</scope>
    <source>
        <strain>AF16</strain>
    </source>
</reference>
<reference key="2">
    <citation type="journal article" date="2003" name="PLoS Biol.">
        <title>The genome sequence of Caenorhabditis briggsae: a platform for comparative genomics.</title>
        <authorList>
            <person name="Stein L.D."/>
            <person name="Bao Z."/>
            <person name="Blasiar D."/>
            <person name="Blumenthal T."/>
            <person name="Brent M.R."/>
            <person name="Chen N."/>
            <person name="Chinwalla A."/>
            <person name="Clarke L."/>
            <person name="Clee C."/>
            <person name="Coghlan A."/>
            <person name="Coulson A."/>
            <person name="D'Eustachio P."/>
            <person name="Fitch D.H.A."/>
            <person name="Fulton L.A."/>
            <person name="Fulton R.E."/>
            <person name="Griffiths-Jones S."/>
            <person name="Harris T.W."/>
            <person name="Hillier L.W."/>
            <person name="Kamath R."/>
            <person name="Kuwabara P.E."/>
            <person name="Mardis E.R."/>
            <person name="Marra M.A."/>
            <person name="Miner T.L."/>
            <person name="Minx P."/>
            <person name="Mullikin J.C."/>
            <person name="Plumb R.W."/>
            <person name="Rogers J."/>
            <person name="Schein J.E."/>
            <person name="Sohrmann M."/>
            <person name="Spieth J."/>
            <person name="Stajich J.E."/>
            <person name="Wei C."/>
            <person name="Willey D."/>
            <person name="Wilson R.K."/>
            <person name="Durbin R.M."/>
            <person name="Waterston R.H."/>
        </authorList>
    </citation>
    <scope>NUCLEOTIDE SEQUENCE [LARGE SCALE GENOMIC DNA]</scope>
    <source>
        <strain>AF16</strain>
    </source>
</reference>
<name>GPA4_CAEBR</name>
<keyword id="KW-0342">GTP-binding</keyword>
<keyword id="KW-0449">Lipoprotein</keyword>
<keyword id="KW-0460">Magnesium</keyword>
<keyword id="KW-0479">Metal-binding</keyword>
<keyword id="KW-0519">Myristate</keyword>
<keyword id="KW-0547">Nucleotide-binding</keyword>
<keyword id="KW-0564">Palmitate</keyword>
<keyword id="KW-1185">Reference proteome</keyword>
<keyword id="KW-0807">Transducer</keyword>